<feature type="chain" id="PRO_1000054550" description="Large ribosomal subunit protein uL15">
    <location>
        <begin position="1"/>
        <end position="152"/>
    </location>
</feature>
<dbReference type="EMBL" id="CP000575">
    <property type="protein sequence ID" value="ABN70139.1"/>
    <property type="molecule type" value="Genomic_DNA"/>
</dbReference>
<dbReference type="RefSeq" id="WP_011839330.1">
    <property type="nucleotide sequence ID" value="NC_009033.1"/>
</dbReference>
<dbReference type="SMR" id="A3DNC9"/>
<dbReference type="STRING" id="399550.Smar_1041"/>
<dbReference type="GeneID" id="4906585"/>
<dbReference type="KEGG" id="smr:Smar_1041"/>
<dbReference type="eggNOG" id="arCOG00779">
    <property type="taxonomic scope" value="Archaea"/>
</dbReference>
<dbReference type="HOGENOM" id="CLU_109163_0_0_2"/>
<dbReference type="OrthoDB" id="9418at2157"/>
<dbReference type="Proteomes" id="UP000000254">
    <property type="component" value="Chromosome"/>
</dbReference>
<dbReference type="GO" id="GO:0022625">
    <property type="term" value="C:cytosolic large ribosomal subunit"/>
    <property type="evidence" value="ECO:0007669"/>
    <property type="project" value="TreeGrafter"/>
</dbReference>
<dbReference type="GO" id="GO:0019843">
    <property type="term" value="F:rRNA binding"/>
    <property type="evidence" value="ECO:0007669"/>
    <property type="project" value="UniProtKB-UniRule"/>
</dbReference>
<dbReference type="GO" id="GO:0003735">
    <property type="term" value="F:structural constituent of ribosome"/>
    <property type="evidence" value="ECO:0007669"/>
    <property type="project" value="InterPro"/>
</dbReference>
<dbReference type="GO" id="GO:0006412">
    <property type="term" value="P:translation"/>
    <property type="evidence" value="ECO:0007669"/>
    <property type="project" value="UniProtKB-UniRule"/>
</dbReference>
<dbReference type="Gene3D" id="3.100.10.10">
    <property type="match status" value="1"/>
</dbReference>
<dbReference type="Gene3D" id="4.10.990.10">
    <property type="match status" value="1"/>
</dbReference>
<dbReference type="HAMAP" id="MF_01341">
    <property type="entry name" value="Ribosomal_uL15"/>
    <property type="match status" value="1"/>
</dbReference>
<dbReference type="InterPro" id="IPR027386">
    <property type="entry name" value="Rbsml_uL15_N"/>
</dbReference>
<dbReference type="InterPro" id="IPR030878">
    <property type="entry name" value="Ribosomal_uL15"/>
</dbReference>
<dbReference type="InterPro" id="IPR021131">
    <property type="entry name" value="Ribosomal_uL15/eL18"/>
</dbReference>
<dbReference type="InterPro" id="IPR036227">
    <property type="entry name" value="Ribosomal_uL15/eL18_sf"/>
</dbReference>
<dbReference type="InterPro" id="IPR001196">
    <property type="entry name" value="Ribosomal_uL15_CS"/>
</dbReference>
<dbReference type="PANTHER" id="PTHR11721">
    <property type="entry name" value="60S RIBOSOMAL PROTEIN L27A"/>
    <property type="match status" value="1"/>
</dbReference>
<dbReference type="PANTHER" id="PTHR11721:SF3">
    <property type="entry name" value="LARGE RIBOSOMAL SUBUNIT PROTEIN UL15"/>
    <property type="match status" value="1"/>
</dbReference>
<dbReference type="Pfam" id="PF00828">
    <property type="entry name" value="Ribosomal_L27A"/>
    <property type="match status" value="1"/>
</dbReference>
<dbReference type="SUPFAM" id="SSF52080">
    <property type="entry name" value="Ribosomal proteins L15p and L18e"/>
    <property type="match status" value="1"/>
</dbReference>
<dbReference type="PROSITE" id="PS00475">
    <property type="entry name" value="RIBOSOMAL_L15"/>
    <property type="match status" value="1"/>
</dbReference>
<evidence type="ECO:0000255" key="1">
    <source>
        <dbReference type="HAMAP-Rule" id="MF_01341"/>
    </source>
</evidence>
<evidence type="ECO:0000305" key="2"/>
<keyword id="KW-1185">Reference proteome</keyword>
<keyword id="KW-0687">Ribonucleoprotein</keyword>
<keyword id="KW-0689">Ribosomal protein</keyword>
<keyword id="KW-0694">RNA-binding</keyword>
<keyword id="KW-0699">rRNA-binding</keyword>
<reference key="1">
    <citation type="journal article" date="2009" name="BMC Genomics">
        <title>The complete genome sequence of Staphylothermus marinus reveals differences in sulfur metabolism among heterotrophic Crenarchaeota.</title>
        <authorList>
            <person name="Anderson I.J."/>
            <person name="Dharmarajan L."/>
            <person name="Rodriguez J."/>
            <person name="Hooper S."/>
            <person name="Porat I."/>
            <person name="Ulrich L.E."/>
            <person name="Elkins J.G."/>
            <person name="Mavromatis K."/>
            <person name="Sun H."/>
            <person name="Land M."/>
            <person name="Lapidus A."/>
            <person name="Lucas S."/>
            <person name="Barry K."/>
            <person name="Huber H."/>
            <person name="Zhulin I.B."/>
            <person name="Whitman W.B."/>
            <person name="Mukhopadhyay B."/>
            <person name="Woese C."/>
            <person name="Bristow J."/>
            <person name="Kyrpides N."/>
        </authorList>
    </citation>
    <scope>NUCLEOTIDE SEQUENCE [LARGE SCALE GENOMIC DNA]</scope>
    <source>
        <strain>ATCC 43588 / DSM 3639 / JCM 9404 / F1</strain>
    </source>
</reference>
<reference key="2">
    <citation type="journal article" date="2009" name="Stand. Genomic Sci.">
        <title>Complete genome sequence of Staphylothermus marinus Stetter and Fiala 1986 type strain F1.</title>
        <authorList>
            <person name="Anderson I.J."/>
            <person name="Sun H."/>
            <person name="Lapidus A."/>
            <person name="Copeland A."/>
            <person name="Glavina Del Rio T."/>
            <person name="Tice H."/>
            <person name="Dalin E."/>
            <person name="Lucas S."/>
            <person name="Barry K."/>
            <person name="Land M."/>
            <person name="Richardson P."/>
            <person name="Huber H."/>
            <person name="Kyrpides N.C."/>
        </authorList>
    </citation>
    <scope>NUCLEOTIDE SEQUENCE [LARGE SCALE GENOMIC DNA]</scope>
    <source>
        <strain>ATCC 43588 / DSM 3639 / JCM 9404 / F1</strain>
    </source>
</reference>
<protein>
    <recommendedName>
        <fullName evidence="1">Large ribosomal subunit protein uL15</fullName>
    </recommendedName>
    <alternativeName>
        <fullName evidence="2">50S ribosomal protein L15</fullName>
    </alternativeName>
</protein>
<organism>
    <name type="scientific">Staphylothermus marinus (strain ATCC 43588 / DSM 3639 / JCM 9404 / F1)</name>
    <dbReference type="NCBI Taxonomy" id="399550"/>
    <lineage>
        <taxon>Archaea</taxon>
        <taxon>Thermoproteota</taxon>
        <taxon>Thermoprotei</taxon>
        <taxon>Desulfurococcales</taxon>
        <taxon>Desulfurococcaceae</taxon>
        <taxon>Staphylothermus</taxon>
    </lineage>
</organism>
<name>RL15_STAMF</name>
<proteinExistence type="inferred from homology"/>
<sequence>MVVRKKKKSRKLRGRTRSMGWGRIGQHRKSGARGGFGAVGFHKHKWIWVLKYAPNWYGKHGFTRPPETIYGVYSINVGELDELAKHLVSKNLAYREEGKIVIDVTSMGFNKVLGRGKVTLPLKIITKSISKRAREKITAVGGEVVVIGEKQQ</sequence>
<accession>A3DNC9</accession>
<gene>
    <name evidence="1" type="primary">rpl15</name>
    <name type="ordered locus">Smar_1041</name>
</gene>
<comment type="function">
    <text evidence="1">Binds to the 23S rRNA.</text>
</comment>
<comment type="subunit">
    <text evidence="1">Part of the 50S ribosomal subunit.</text>
</comment>
<comment type="similarity">
    <text evidence="1">Belongs to the universal ribosomal protein uL15 family.</text>
</comment>